<proteinExistence type="inferred from homology"/>
<organism>
    <name type="scientific">Sulfurihydrogenibium sp. (strain YO3AOP1)</name>
    <dbReference type="NCBI Taxonomy" id="436114"/>
    <lineage>
        <taxon>Bacteria</taxon>
        <taxon>Pseudomonadati</taxon>
        <taxon>Aquificota</taxon>
        <taxon>Aquificia</taxon>
        <taxon>Aquificales</taxon>
        <taxon>Hydrogenothermaceae</taxon>
        <taxon>Sulfurihydrogenibium</taxon>
    </lineage>
</organism>
<accession>B2V9M1</accession>
<reference key="1">
    <citation type="journal article" date="2009" name="J. Bacteriol.">
        <title>Complete and draft genome sequences of six members of the Aquificales.</title>
        <authorList>
            <person name="Reysenbach A.-L."/>
            <person name="Hamamura N."/>
            <person name="Podar M."/>
            <person name="Griffiths E."/>
            <person name="Ferreira S."/>
            <person name="Hochstein R."/>
            <person name="Heidelberg J."/>
            <person name="Johnson J."/>
            <person name="Mead D."/>
            <person name="Pohorille A."/>
            <person name="Sarmiento M."/>
            <person name="Schweighofer K."/>
            <person name="Seshadri R."/>
            <person name="Voytek M.A."/>
        </authorList>
    </citation>
    <scope>NUCLEOTIDE SEQUENCE [LARGE SCALE GENOMIC DNA]</scope>
    <source>
        <strain>YO3AOP1</strain>
    </source>
</reference>
<dbReference type="EC" id="2.1.2.1" evidence="1"/>
<dbReference type="EMBL" id="CP001080">
    <property type="protein sequence ID" value="ACD66644.1"/>
    <property type="molecule type" value="Genomic_DNA"/>
</dbReference>
<dbReference type="RefSeq" id="WP_012459714.1">
    <property type="nucleotide sequence ID" value="NC_010730.1"/>
</dbReference>
<dbReference type="SMR" id="B2V9M1"/>
<dbReference type="STRING" id="436114.SYO3AOP1_1025"/>
<dbReference type="KEGG" id="sul:SYO3AOP1_1025"/>
<dbReference type="eggNOG" id="COG0112">
    <property type="taxonomic scope" value="Bacteria"/>
</dbReference>
<dbReference type="HOGENOM" id="CLU_022477_2_1_0"/>
<dbReference type="UniPathway" id="UPA00193"/>
<dbReference type="UniPathway" id="UPA00288">
    <property type="reaction ID" value="UER01023"/>
</dbReference>
<dbReference type="GO" id="GO:0005829">
    <property type="term" value="C:cytosol"/>
    <property type="evidence" value="ECO:0007669"/>
    <property type="project" value="TreeGrafter"/>
</dbReference>
<dbReference type="GO" id="GO:0004372">
    <property type="term" value="F:glycine hydroxymethyltransferase activity"/>
    <property type="evidence" value="ECO:0007669"/>
    <property type="project" value="UniProtKB-UniRule"/>
</dbReference>
<dbReference type="GO" id="GO:0030170">
    <property type="term" value="F:pyridoxal phosphate binding"/>
    <property type="evidence" value="ECO:0007669"/>
    <property type="project" value="UniProtKB-UniRule"/>
</dbReference>
<dbReference type="GO" id="GO:0019264">
    <property type="term" value="P:glycine biosynthetic process from serine"/>
    <property type="evidence" value="ECO:0007669"/>
    <property type="project" value="UniProtKB-UniRule"/>
</dbReference>
<dbReference type="GO" id="GO:0035999">
    <property type="term" value="P:tetrahydrofolate interconversion"/>
    <property type="evidence" value="ECO:0007669"/>
    <property type="project" value="UniProtKB-UniRule"/>
</dbReference>
<dbReference type="CDD" id="cd00378">
    <property type="entry name" value="SHMT"/>
    <property type="match status" value="1"/>
</dbReference>
<dbReference type="FunFam" id="3.40.640.10:FF:000001">
    <property type="entry name" value="Serine hydroxymethyltransferase"/>
    <property type="match status" value="1"/>
</dbReference>
<dbReference type="FunFam" id="3.90.1150.10:FF:000003">
    <property type="entry name" value="Serine hydroxymethyltransferase"/>
    <property type="match status" value="1"/>
</dbReference>
<dbReference type="Gene3D" id="3.90.1150.10">
    <property type="entry name" value="Aspartate Aminotransferase, domain 1"/>
    <property type="match status" value="1"/>
</dbReference>
<dbReference type="Gene3D" id="3.40.640.10">
    <property type="entry name" value="Type I PLP-dependent aspartate aminotransferase-like (Major domain)"/>
    <property type="match status" value="1"/>
</dbReference>
<dbReference type="HAMAP" id="MF_00051">
    <property type="entry name" value="SHMT"/>
    <property type="match status" value="1"/>
</dbReference>
<dbReference type="InterPro" id="IPR015424">
    <property type="entry name" value="PyrdxlP-dep_Trfase"/>
</dbReference>
<dbReference type="InterPro" id="IPR015421">
    <property type="entry name" value="PyrdxlP-dep_Trfase_major"/>
</dbReference>
<dbReference type="InterPro" id="IPR015422">
    <property type="entry name" value="PyrdxlP-dep_Trfase_small"/>
</dbReference>
<dbReference type="InterPro" id="IPR001085">
    <property type="entry name" value="Ser_HO-MeTrfase"/>
</dbReference>
<dbReference type="InterPro" id="IPR049943">
    <property type="entry name" value="Ser_HO-MeTrfase-like"/>
</dbReference>
<dbReference type="InterPro" id="IPR019798">
    <property type="entry name" value="Ser_HO-MeTrfase_PLP_BS"/>
</dbReference>
<dbReference type="InterPro" id="IPR039429">
    <property type="entry name" value="SHMT-like_dom"/>
</dbReference>
<dbReference type="NCBIfam" id="NF000586">
    <property type="entry name" value="PRK00011.1"/>
    <property type="match status" value="1"/>
</dbReference>
<dbReference type="PANTHER" id="PTHR11680">
    <property type="entry name" value="SERINE HYDROXYMETHYLTRANSFERASE"/>
    <property type="match status" value="1"/>
</dbReference>
<dbReference type="PANTHER" id="PTHR11680:SF35">
    <property type="entry name" value="SERINE HYDROXYMETHYLTRANSFERASE 1"/>
    <property type="match status" value="1"/>
</dbReference>
<dbReference type="Pfam" id="PF00464">
    <property type="entry name" value="SHMT"/>
    <property type="match status" value="1"/>
</dbReference>
<dbReference type="PIRSF" id="PIRSF000412">
    <property type="entry name" value="SHMT"/>
    <property type="match status" value="1"/>
</dbReference>
<dbReference type="SUPFAM" id="SSF53383">
    <property type="entry name" value="PLP-dependent transferases"/>
    <property type="match status" value="1"/>
</dbReference>
<dbReference type="PROSITE" id="PS00096">
    <property type="entry name" value="SHMT"/>
    <property type="match status" value="1"/>
</dbReference>
<comment type="function">
    <text evidence="1">Catalyzes the reversible interconversion of serine and glycine with tetrahydrofolate (THF) serving as the one-carbon carrier. This reaction serves as the major source of one-carbon groups required for the biosynthesis of purines, thymidylate, methionine, and other important biomolecules. Also exhibits THF-independent aldolase activity toward beta-hydroxyamino acids, producing glycine and aldehydes, via a retro-aldol mechanism.</text>
</comment>
<comment type="catalytic activity">
    <reaction evidence="1">
        <text>(6R)-5,10-methylene-5,6,7,8-tetrahydrofolate + glycine + H2O = (6S)-5,6,7,8-tetrahydrofolate + L-serine</text>
        <dbReference type="Rhea" id="RHEA:15481"/>
        <dbReference type="ChEBI" id="CHEBI:15377"/>
        <dbReference type="ChEBI" id="CHEBI:15636"/>
        <dbReference type="ChEBI" id="CHEBI:33384"/>
        <dbReference type="ChEBI" id="CHEBI:57305"/>
        <dbReference type="ChEBI" id="CHEBI:57453"/>
        <dbReference type="EC" id="2.1.2.1"/>
    </reaction>
</comment>
<comment type="cofactor">
    <cofactor evidence="1">
        <name>pyridoxal 5'-phosphate</name>
        <dbReference type="ChEBI" id="CHEBI:597326"/>
    </cofactor>
</comment>
<comment type="pathway">
    <text evidence="1">One-carbon metabolism; tetrahydrofolate interconversion.</text>
</comment>
<comment type="pathway">
    <text evidence="1">Amino-acid biosynthesis; glycine biosynthesis; glycine from L-serine: step 1/1.</text>
</comment>
<comment type="subunit">
    <text evidence="1">Homodimer.</text>
</comment>
<comment type="subcellular location">
    <subcellularLocation>
        <location evidence="1">Cytoplasm</location>
    </subcellularLocation>
</comment>
<comment type="similarity">
    <text evidence="1">Belongs to the SHMT family.</text>
</comment>
<feature type="chain" id="PRO_0000369959" description="Serine hydroxymethyltransferase">
    <location>
        <begin position="1"/>
        <end position="422"/>
    </location>
</feature>
<feature type="binding site" evidence="1">
    <location>
        <position position="118"/>
    </location>
    <ligand>
        <name>(6S)-5,6,7,8-tetrahydrofolate</name>
        <dbReference type="ChEBI" id="CHEBI:57453"/>
    </ligand>
</feature>
<feature type="binding site" evidence="1">
    <location>
        <begin position="122"/>
        <end position="124"/>
    </location>
    <ligand>
        <name>(6S)-5,6,7,8-tetrahydrofolate</name>
        <dbReference type="ChEBI" id="CHEBI:57453"/>
    </ligand>
</feature>
<feature type="binding site" evidence="1">
    <location>
        <position position="242"/>
    </location>
    <ligand>
        <name>(6S)-5,6,7,8-tetrahydrofolate</name>
        <dbReference type="ChEBI" id="CHEBI:57453"/>
    </ligand>
</feature>
<feature type="site" description="Plays an important role in substrate specificity" evidence="1">
    <location>
        <position position="226"/>
    </location>
</feature>
<feature type="modified residue" description="N6-(pyridoxal phosphate)lysine" evidence="1">
    <location>
        <position position="227"/>
    </location>
</feature>
<name>GLYA_SULSY</name>
<protein>
    <recommendedName>
        <fullName evidence="1">Serine hydroxymethyltransferase</fullName>
        <shortName evidence="1">SHMT</shortName>
        <shortName evidence="1">Serine methylase</shortName>
        <ecNumber evidence="1">2.1.2.1</ecNumber>
    </recommendedName>
</protein>
<keyword id="KW-0028">Amino-acid biosynthesis</keyword>
<keyword id="KW-0963">Cytoplasm</keyword>
<keyword id="KW-0554">One-carbon metabolism</keyword>
<keyword id="KW-0663">Pyridoxal phosphate</keyword>
<keyword id="KW-0808">Transferase</keyword>
<evidence type="ECO:0000255" key="1">
    <source>
        <dbReference type="HAMAP-Rule" id="MF_00051"/>
    </source>
</evidence>
<sequence>MLNHLKNVDPEVYSAISKEFKRQEEHLEMIASENYTSQAVMEAQGSVLTNKYAEGLPHKRYYGGCEYVDIVEDLAIERLKKLFGAEYANVQPHSGSQANQAVFFSQLQPGDTILGMRLDHGGHLTHGAKVNVSGIVFNSVQYGLNPQTELIDYDEVYRLAKEYKPKMIVAGASAYSRVIDFAKFREIADEVGALLMVDMAHYAGLIAGGVYPNPVPYAQFVTSTTHKTLRGPRGGVILCKSEYAKDIDKWVFPRLQGGPLMHVIAAKAVAFGEALTEDFKKYAEQVVKNARALAEELMAEGLRIVSGGTDSHMMLVDLRPLNVKGNQAEEALGKANITVNKNAIPFDPEKPTVTSGIRLGTAALTTRGMKENDMRRIAKNIVKVLKNLDNEKVIQEARDDVLSLCSSYPLYPDWFKDYGYGE</sequence>
<gene>
    <name evidence="1" type="primary">glyA</name>
    <name type="ordered locus">SYO3AOP1_1025</name>
</gene>